<organism>
    <name type="scientific">Staphylococcus epidermidis (strain ATCC 12228 / FDA PCI 1200)</name>
    <dbReference type="NCBI Taxonomy" id="176280"/>
    <lineage>
        <taxon>Bacteria</taxon>
        <taxon>Bacillati</taxon>
        <taxon>Bacillota</taxon>
        <taxon>Bacilli</taxon>
        <taxon>Bacillales</taxon>
        <taxon>Staphylococcaceae</taxon>
        <taxon>Staphylococcus</taxon>
    </lineage>
</organism>
<keyword id="KW-1003">Cell membrane</keyword>
<keyword id="KW-0143">Chaperone</keyword>
<keyword id="KW-0449">Lipoprotein</keyword>
<keyword id="KW-0472">Membrane</keyword>
<keyword id="KW-0564">Palmitate</keyword>
<keyword id="KW-0653">Protein transport</keyword>
<keyword id="KW-0732">Signal</keyword>
<keyword id="KW-0812">Transmembrane</keyword>
<keyword id="KW-1133">Transmembrane helix</keyword>
<keyword id="KW-0813">Transport</keyword>
<name>YIDC2_STAES</name>
<dbReference type="EMBL" id="AE015929">
    <property type="protein sequence ID" value="AAO05649.1"/>
    <property type="molecule type" value="Genomic_DNA"/>
</dbReference>
<dbReference type="RefSeq" id="NP_765563.1">
    <property type="nucleotide sequence ID" value="NC_004461.1"/>
</dbReference>
<dbReference type="SMR" id="Q8CMK4"/>
<dbReference type="DNASU" id="1055953"/>
<dbReference type="KEGG" id="sep:SE_2008"/>
<dbReference type="PATRIC" id="fig|176280.10.peg.1961"/>
<dbReference type="eggNOG" id="COG0706">
    <property type="taxonomic scope" value="Bacteria"/>
</dbReference>
<dbReference type="HOGENOM" id="CLU_036138_5_2_9"/>
<dbReference type="OrthoDB" id="9780552at2"/>
<dbReference type="Proteomes" id="UP000001411">
    <property type="component" value="Chromosome"/>
</dbReference>
<dbReference type="GO" id="GO:0005886">
    <property type="term" value="C:plasma membrane"/>
    <property type="evidence" value="ECO:0007669"/>
    <property type="project" value="UniProtKB-SubCell"/>
</dbReference>
<dbReference type="GO" id="GO:0032977">
    <property type="term" value="F:membrane insertase activity"/>
    <property type="evidence" value="ECO:0007669"/>
    <property type="project" value="InterPro"/>
</dbReference>
<dbReference type="GO" id="GO:0051205">
    <property type="term" value="P:protein insertion into membrane"/>
    <property type="evidence" value="ECO:0007669"/>
    <property type="project" value="TreeGrafter"/>
</dbReference>
<dbReference type="GO" id="GO:0015031">
    <property type="term" value="P:protein transport"/>
    <property type="evidence" value="ECO:0007669"/>
    <property type="project" value="UniProtKB-KW"/>
</dbReference>
<dbReference type="CDD" id="cd20070">
    <property type="entry name" value="5TM_YidC_Alb3"/>
    <property type="match status" value="1"/>
</dbReference>
<dbReference type="HAMAP" id="MF_01811">
    <property type="entry name" value="YidC_type2"/>
    <property type="match status" value="1"/>
</dbReference>
<dbReference type="InterPro" id="IPR001708">
    <property type="entry name" value="YidC/ALB3/OXA1/COX18"/>
</dbReference>
<dbReference type="InterPro" id="IPR028055">
    <property type="entry name" value="YidC/Oxa/ALB_C"/>
</dbReference>
<dbReference type="InterPro" id="IPR023060">
    <property type="entry name" value="YidC/YidC1/YidC2_Firmicutes"/>
</dbReference>
<dbReference type="InterPro" id="IPR047196">
    <property type="entry name" value="YidC_ALB_C"/>
</dbReference>
<dbReference type="NCBIfam" id="TIGR03592">
    <property type="entry name" value="yidC_oxa1_cterm"/>
    <property type="match status" value="1"/>
</dbReference>
<dbReference type="PANTHER" id="PTHR12428:SF65">
    <property type="entry name" value="CYTOCHROME C OXIDASE ASSEMBLY PROTEIN COX18, MITOCHONDRIAL"/>
    <property type="match status" value="1"/>
</dbReference>
<dbReference type="PANTHER" id="PTHR12428">
    <property type="entry name" value="OXA1"/>
    <property type="match status" value="1"/>
</dbReference>
<dbReference type="Pfam" id="PF02096">
    <property type="entry name" value="60KD_IMP"/>
    <property type="match status" value="1"/>
</dbReference>
<dbReference type="PRINTS" id="PR00701">
    <property type="entry name" value="60KDINNERMP"/>
</dbReference>
<dbReference type="PROSITE" id="PS51257">
    <property type="entry name" value="PROKAR_LIPOPROTEIN"/>
    <property type="match status" value="1"/>
</dbReference>
<sequence length="278" mass="32335">MHKRLFITLLGFIILLAGCDYSKEENQTGIFYNVFVKSMDGFLHFLGRVFQDNYGFAIISIVLIVRFILLPFMLIQVKNMHMMREKTKVVQPELDAIRDKMKHATSQEERNAANQLLMKKYQSYGINPLKNMLGCLPVLIQMPILMGLYMSLKYPSSHGITEYPHFLWFDLTQPDLIMTIIAAIMYFVQPLVNSIHYPKDQRKTYYFMMVFSPIFITYASLHSAAALGLYWSISAAFLIVQMHFAHSHYKKVALHEAKKLKQKLEQNKDNSELLTEES</sequence>
<proteinExistence type="inferred from homology"/>
<feature type="signal peptide" evidence="1">
    <location>
        <begin position="1"/>
        <end position="18"/>
    </location>
</feature>
<feature type="chain" id="PRO_0000020398" description="Membrane protein insertase YidC 2">
    <location>
        <begin position="19"/>
        <end position="278"/>
    </location>
</feature>
<feature type="transmembrane region" description="Helical" evidence="1">
    <location>
        <begin position="55"/>
        <end position="75"/>
    </location>
</feature>
<feature type="transmembrane region" description="Helical" evidence="1">
    <location>
        <begin position="132"/>
        <end position="152"/>
    </location>
</feature>
<feature type="transmembrane region" description="Helical" evidence="1">
    <location>
        <begin position="176"/>
        <end position="196"/>
    </location>
</feature>
<feature type="transmembrane region" description="Helical" evidence="1">
    <location>
        <begin position="224"/>
        <end position="244"/>
    </location>
</feature>
<feature type="lipid moiety-binding region" description="N-palmitoyl cysteine" evidence="1">
    <location>
        <position position="19"/>
    </location>
</feature>
<feature type="lipid moiety-binding region" description="S-diacylglycerol cysteine" evidence="1">
    <location>
        <position position="19"/>
    </location>
</feature>
<accession>Q8CMK4</accession>
<evidence type="ECO:0000255" key="1">
    <source>
        <dbReference type="HAMAP-Rule" id="MF_01811"/>
    </source>
</evidence>
<protein>
    <recommendedName>
        <fullName evidence="1">Membrane protein insertase YidC 2</fullName>
    </recommendedName>
    <alternativeName>
        <fullName evidence="1">Foldase YidC 2</fullName>
    </alternativeName>
    <alternativeName>
        <fullName evidence="1">Membrane integrase YidC 2</fullName>
    </alternativeName>
    <alternativeName>
        <fullName evidence="1">Membrane protein YidC 2</fullName>
    </alternativeName>
</protein>
<reference key="1">
    <citation type="journal article" date="2003" name="Mol. Microbiol.">
        <title>Genome-based analysis of virulence genes in a non-biofilm-forming Staphylococcus epidermidis strain (ATCC 12228).</title>
        <authorList>
            <person name="Zhang Y.-Q."/>
            <person name="Ren S.-X."/>
            <person name="Li H.-L."/>
            <person name="Wang Y.-X."/>
            <person name="Fu G."/>
            <person name="Yang J."/>
            <person name="Qin Z.-Q."/>
            <person name="Miao Y.-G."/>
            <person name="Wang W.-Y."/>
            <person name="Chen R.-S."/>
            <person name="Shen Y."/>
            <person name="Chen Z."/>
            <person name="Yuan Z.-H."/>
            <person name="Zhao G.-P."/>
            <person name="Qu D."/>
            <person name="Danchin A."/>
            <person name="Wen Y.-M."/>
        </authorList>
    </citation>
    <scope>NUCLEOTIDE SEQUENCE [LARGE SCALE GENOMIC DNA]</scope>
    <source>
        <strain>ATCC 12228 / FDA PCI 1200</strain>
    </source>
</reference>
<gene>
    <name evidence="1" type="primary">yidC2</name>
    <name type="ordered locus">SE_2008</name>
</gene>
<comment type="function">
    <text evidence="1">Required for the insertion and/or proper folding and/or complex formation of integral membrane proteins into the membrane. Involved in integration of membrane proteins that insert both dependently and independently of the Sec translocase complex, as well as at least some lipoproteins.</text>
</comment>
<comment type="subcellular location">
    <subcellularLocation>
        <location evidence="1">Cell membrane</location>
        <topology evidence="1">Multi-pass membrane protein</topology>
    </subcellularLocation>
</comment>
<comment type="similarity">
    <text evidence="1">Belongs to the OXA1/ALB3/YidC family. Type 2 subfamily.</text>
</comment>